<protein>
    <recommendedName>
        <fullName evidence="2">L-erythrulose-1-phosphate isomerase</fullName>
        <ecNumber evidence="2">5.3.1.33</ecNumber>
    </recommendedName>
    <alternativeName>
        <fullName evidence="2">D-3-tetrulose-4-phosphate isomerase</fullName>
    </alternativeName>
</protein>
<evidence type="ECO:0000250" key="1">
    <source>
        <dbReference type="UniProtKB" id="P9WG43"/>
    </source>
</evidence>
<evidence type="ECO:0000250" key="2">
    <source>
        <dbReference type="UniProtKB" id="Q2YIQ6"/>
    </source>
</evidence>
<evidence type="ECO:0000305" key="3"/>
<gene>
    <name evidence="2" type="primary">eryH</name>
    <name type="ordered locus">R02226</name>
    <name type="ORF">SMc01614</name>
</gene>
<feature type="chain" id="PRO_0000090277" description="L-erythrulose-1-phosphate isomerase">
    <location>
        <begin position="1"/>
        <end position="255"/>
    </location>
</feature>
<feature type="active site" description="Electrophile" evidence="1">
    <location>
        <position position="98"/>
    </location>
</feature>
<feature type="active site" description="Proton acceptor" evidence="1">
    <location>
        <position position="171"/>
    </location>
</feature>
<feature type="binding site" evidence="1">
    <location>
        <position position="177"/>
    </location>
    <ligand>
        <name>substrate</name>
    </ligand>
</feature>
<feature type="binding site" evidence="1">
    <location>
        <position position="214"/>
    </location>
    <ligand>
        <name>substrate</name>
    </ligand>
</feature>
<name>ERYH_RHIME</name>
<dbReference type="EC" id="5.3.1.33" evidence="2"/>
<dbReference type="EMBL" id="AL591688">
    <property type="protein sequence ID" value="CAC46805.1"/>
    <property type="molecule type" value="Genomic_DNA"/>
</dbReference>
<dbReference type="RefSeq" id="NP_386332.1">
    <property type="nucleotide sequence ID" value="NC_003047.1"/>
</dbReference>
<dbReference type="RefSeq" id="WP_010969784.1">
    <property type="nucleotide sequence ID" value="NC_003047.1"/>
</dbReference>
<dbReference type="SMR" id="Q92NH8"/>
<dbReference type="EnsemblBacteria" id="CAC46805">
    <property type="protein sequence ID" value="CAC46805"/>
    <property type="gene ID" value="SMc01614"/>
</dbReference>
<dbReference type="KEGG" id="sme:SMc01614"/>
<dbReference type="PATRIC" id="fig|266834.11.peg.3695"/>
<dbReference type="eggNOG" id="COG0149">
    <property type="taxonomic scope" value="Bacteria"/>
</dbReference>
<dbReference type="HOGENOM" id="CLU_024251_2_3_5"/>
<dbReference type="OrthoDB" id="9809429at2"/>
<dbReference type="UniPathway" id="UPA01066"/>
<dbReference type="Proteomes" id="UP000001976">
    <property type="component" value="Chromosome"/>
</dbReference>
<dbReference type="GO" id="GO:0005829">
    <property type="term" value="C:cytosol"/>
    <property type="evidence" value="ECO:0007669"/>
    <property type="project" value="TreeGrafter"/>
</dbReference>
<dbReference type="GO" id="GO:0004807">
    <property type="term" value="F:triose-phosphate isomerase activity"/>
    <property type="evidence" value="ECO:0007669"/>
    <property type="project" value="InterPro"/>
</dbReference>
<dbReference type="GO" id="GO:0006094">
    <property type="term" value="P:gluconeogenesis"/>
    <property type="evidence" value="ECO:0007669"/>
    <property type="project" value="UniProtKB-KW"/>
</dbReference>
<dbReference type="GO" id="GO:0046166">
    <property type="term" value="P:glyceraldehyde-3-phosphate biosynthetic process"/>
    <property type="evidence" value="ECO:0007669"/>
    <property type="project" value="TreeGrafter"/>
</dbReference>
<dbReference type="GO" id="GO:0019563">
    <property type="term" value="P:glycerol catabolic process"/>
    <property type="evidence" value="ECO:0007669"/>
    <property type="project" value="TreeGrafter"/>
</dbReference>
<dbReference type="GO" id="GO:0006096">
    <property type="term" value="P:glycolytic process"/>
    <property type="evidence" value="ECO:0007669"/>
    <property type="project" value="UniProtKB-KW"/>
</dbReference>
<dbReference type="GO" id="GO:0006098">
    <property type="term" value="P:pentose-phosphate shunt"/>
    <property type="evidence" value="ECO:0007669"/>
    <property type="project" value="UniProtKB-KW"/>
</dbReference>
<dbReference type="CDD" id="cd00311">
    <property type="entry name" value="TIM"/>
    <property type="match status" value="1"/>
</dbReference>
<dbReference type="Gene3D" id="3.20.20.70">
    <property type="entry name" value="Aldolase class I"/>
    <property type="match status" value="1"/>
</dbReference>
<dbReference type="InterPro" id="IPR013785">
    <property type="entry name" value="Aldolase_TIM"/>
</dbReference>
<dbReference type="InterPro" id="IPR035990">
    <property type="entry name" value="TIM_sf"/>
</dbReference>
<dbReference type="InterPro" id="IPR000652">
    <property type="entry name" value="Triosephosphate_isomerase"/>
</dbReference>
<dbReference type="InterPro" id="IPR020861">
    <property type="entry name" value="Triosephosphate_isomerase_AS"/>
</dbReference>
<dbReference type="NCBIfam" id="NF000722">
    <property type="entry name" value="PRK00042.2-1"/>
    <property type="match status" value="1"/>
</dbReference>
<dbReference type="NCBIfam" id="TIGR00419">
    <property type="entry name" value="tim"/>
    <property type="match status" value="1"/>
</dbReference>
<dbReference type="PANTHER" id="PTHR21139">
    <property type="entry name" value="TRIOSEPHOSPHATE ISOMERASE"/>
    <property type="match status" value="1"/>
</dbReference>
<dbReference type="PANTHER" id="PTHR21139:SF42">
    <property type="entry name" value="TRIOSEPHOSPHATE ISOMERASE"/>
    <property type="match status" value="1"/>
</dbReference>
<dbReference type="Pfam" id="PF00121">
    <property type="entry name" value="TIM"/>
    <property type="match status" value="1"/>
</dbReference>
<dbReference type="SUPFAM" id="SSF51351">
    <property type="entry name" value="Triosephosphate isomerase (TIM)"/>
    <property type="match status" value="1"/>
</dbReference>
<dbReference type="PROSITE" id="PS00171">
    <property type="entry name" value="TIM_1"/>
    <property type="match status" value="1"/>
</dbReference>
<dbReference type="PROSITE" id="PS51440">
    <property type="entry name" value="TIM_2"/>
    <property type="match status" value="1"/>
</dbReference>
<accession>Q92NH8</accession>
<reference key="1">
    <citation type="journal article" date="2001" name="Proc. Natl. Acad. Sci. U.S.A.">
        <title>Analysis of the chromosome sequence of the legume symbiont Sinorhizobium meliloti strain 1021.</title>
        <authorList>
            <person name="Capela D."/>
            <person name="Barloy-Hubler F."/>
            <person name="Gouzy J."/>
            <person name="Bothe G."/>
            <person name="Ampe F."/>
            <person name="Batut J."/>
            <person name="Boistard P."/>
            <person name="Becker A."/>
            <person name="Boutry M."/>
            <person name="Cadieu E."/>
            <person name="Dreano S."/>
            <person name="Gloux S."/>
            <person name="Godrie T."/>
            <person name="Goffeau A."/>
            <person name="Kahn D."/>
            <person name="Kiss E."/>
            <person name="Lelaure V."/>
            <person name="Masuy D."/>
            <person name="Pohl T."/>
            <person name="Portetelle D."/>
            <person name="Puehler A."/>
            <person name="Purnelle B."/>
            <person name="Ramsperger U."/>
            <person name="Renard C."/>
            <person name="Thebault P."/>
            <person name="Vandenbol M."/>
            <person name="Weidner S."/>
            <person name="Galibert F."/>
        </authorList>
    </citation>
    <scope>NUCLEOTIDE SEQUENCE [LARGE SCALE GENOMIC DNA]</scope>
    <source>
        <strain>1021</strain>
    </source>
</reference>
<reference key="2">
    <citation type="journal article" date="2001" name="Science">
        <title>The composite genome of the legume symbiont Sinorhizobium meliloti.</title>
        <authorList>
            <person name="Galibert F."/>
            <person name="Finan T.M."/>
            <person name="Long S.R."/>
            <person name="Puehler A."/>
            <person name="Abola P."/>
            <person name="Ampe F."/>
            <person name="Barloy-Hubler F."/>
            <person name="Barnett M.J."/>
            <person name="Becker A."/>
            <person name="Boistard P."/>
            <person name="Bothe G."/>
            <person name="Boutry M."/>
            <person name="Bowser L."/>
            <person name="Buhrmester J."/>
            <person name="Cadieu E."/>
            <person name="Capela D."/>
            <person name="Chain P."/>
            <person name="Cowie A."/>
            <person name="Davis R.W."/>
            <person name="Dreano S."/>
            <person name="Federspiel N.A."/>
            <person name="Fisher R.F."/>
            <person name="Gloux S."/>
            <person name="Godrie T."/>
            <person name="Goffeau A."/>
            <person name="Golding B."/>
            <person name="Gouzy J."/>
            <person name="Gurjal M."/>
            <person name="Hernandez-Lucas I."/>
            <person name="Hong A."/>
            <person name="Huizar L."/>
            <person name="Hyman R.W."/>
            <person name="Jones T."/>
            <person name="Kahn D."/>
            <person name="Kahn M.L."/>
            <person name="Kalman S."/>
            <person name="Keating D.H."/>
            <person name="Kiss E."/>
            <person name="Komp C."/>
            <person name="Lelaure V."/>
            <person name="Masuy D."/>
            <person name="Palm C."/>
            <person name="Peck M.C."/>
            <person name="Pohl T.M."/>
            <person name="Portetelle D."/>
            <person name="Purnelle B."/>
            <person name="Ramsperger U."/>
            <person name="Surzycki R."/>
            <person name="Thebault P."/>
            <person name="Vandenbol M."/>
            <person name="Vorhoelter F.J."/>
            <person name="Weidner S."/>
            <person name="Wells D.H."/>
            <person name="Wong K."/>
            <person name="Yeh K.-C."/>
            <person name="Batut J."/>
        </authorList>
    </citation>
    <scope>NUCLEOTIDE SEQUENCE [LARGE SCALE GENOMIC DNA]</scope>
    <source>
        <strain>1021</strain>
    </source>
</reference>
<proteinExistence type="inferred from homology"/>
<organism>
    <name type="scientific">Rhizobium meliloti (strain 1021)</name>
    <name type="common">Ensifer meliloti</name>
    <name type="synonym">Sinorhizobium meliloti</name>
    <dbReference type="NCBI Taxonomy" id="266834"/>
    <lineage>
        <taxon>Bacteria</taxon>
        <taxon>Pseudomonadati</taxon>
        <taxon>Pseudomonadota</taxon>
        <taxon>Alphaproteobacteria</taxon>
        <taxon>Hyphomicrobiales</taxon>
        <taxon>Rhizobiaceae</taxon>
        <taxon>Sinorhizobium/Ensifer group</taxon>
        <taxon>Sinorhizobium</taxon>
    </lineage>
</organism>
<comment type="function">
    <text evidence="2">Catalyzes the isomerization of D-erythrulose-4P to L-erythrulose-1P.</text>
</comment>
<comment type="catalytic activity">
    <reaction evidence="2">
        <text>L-erythrulose 1-phosphate = D-erythrulose 4-phosphate</text>
        <dbReference type="Rhea" id="RHEA:49588"/>
        <dbReference type="ChEBI" id="CHEBI:58002"/>
        <dbReference type="ChEBI" id="CHEBI:90796"/>
        <dbReference type="EC" id="5.3.1.33"/>
    </reaction>
</comment>
<comment type="pathway">
    <text evidence="2">Carbohydrate metabolism; erythritol degradation.</text>
</comment>
<comment type="subunit">
    <text evidence="1">Homodimer.</text>
</comment>
<comment type="subcellular location">
    <subcellularLocation>
        <location evidence="1">Cytoplasm</location>
    </subcellularLocation>
</comment>
<comment type="similarity">
    <text evidence="3">Belongs to the triosephosphate isomerase family.</text>
</comment>
<sequence length="255" mass="27623">MSKSGLWVGTSWKMNKTLAEAMVFADGLAAADDARDQRIQRFVIPPFTAARQVKERLKATSVKVGAQNMHWDDAGAWTGEISPVMLSDCDLDIVELGHSERREHFGETDRTVGLKTAAAVKHGLVPLICIGETLAQREAGEADTVLKRQVEGAFAFLEGAARKAPVLLAYEPVWAIGVNGIPATADYADARHRLIGEVAERALGVKVPVLYGGSVNPQNCEELILQPHIDGLFIGRSAWDVGGYLDILQRVARAI</sequence>
<keyword id="KW-0963">Cytoplasm</keyword>
<keyword id="KW-0312">Gluconeogenesis</keyword>
<keyword id="KW-0324">Glycolysis</keyword>
<keyword id="KW-0413">Isomerase</keyword>
<keyword id="KW-0570">Pentose shunt</keyword>
<keyword id="KW-1185">Reference proteome</keyword>